<sequence length="497" mass="54929">MSIPNSFIIVGSGVFGLSLAYALSLDDRFADKKIILVDRWNFEPPNATGSVHNPAAANADTSRVIRRDYPHGPYASLALEAMKHWRGKFGENNRYVNQRLLFSGEGSSLTTPPKALETVNYIKKAYAISCELTPGGRDAVQVLDSLDEVRAFLGNTPSHPPHLPVNKDPAARDLRGYVSNDCGWADAGASIEWLRQEVLRLGRVECVVGEVESLVYSDDQRAVKGVKLVDGKVLTAELTVIAAGARSSHILGIPKLCDVYSEFVAYIQLTKEEADELRRRQWPILVNCHRGVFAVGPDHDNCLKFGHFSYSGIVDVLREASIQVPTRPDGWEAQQKYWSDPRFAFGGEVKVSALGDVDDYENPAAQRALADYRLFLLELLGPTGLQGVDTLGLDQSDNLLNNIANRPFTRVRKCWYNDTPALDFVVDYHPSYGKTLFVATGGCDHAFKFLPIIGEKTLALILRNRGDSAVSLPAGVEPSLEELSELWRFPVELLQDN</sequence>
<evidence type="ECO:0000255" key="1"/>
<evidence type="ECO:0000269" key="2">
    <source>
    </source>
</evidence>
<evidence type="ECO:0000269" key="3">
    <source>
    </source>
</evidence>
<evidence type="ECO:0000269" key="4">
    <source>
    </source>
</evidence>
<evidence type="ECO:0000303" key="5">
    <source>
    </source>
</evidence>
<evidence type="ECO:0000303" key="6">
    <source>
    </source>
</evidence>
<evidence type="ECO:0000305" key="7"/>
<evidence type="ECO:0000305" key="8">
    <source>
    </source>
</evidence>
<evidence type="ECO:0007744" key="9">
    <source>
        <dbReference type="PDB" id="6GG2"/>
    </source>
</evidence>
<evidence type="ECO:0007829" key="10">
    <source>
        <dbReference type="PDB" id="6GG2"/>
    </source>
</evidence>
<name>FSQB_ASPFU</name>
<reference key="1">
    <citation type="journal article" date="2005" name="Nature">
        <title>Genomic sequence of the pathogenic and allergenic filamentous fungus Aspergillus fumigatus.</title>
        <authorList>
            <person name="Nierman W.C."/>
            <person name="Pain A."/>
            <person name="Anderson M.J."/>
            <person name="Wortman J.R."/>
            <person name="Kim H.S."/>
            <person name="Arroyo J."/>
            <person name="Berriman M."/>
            <person name="Abe K."/>
            <person name="Archer D.B."/>
            <person name="Bermejo C."/>
            <person name="Bennett J.W."/>
            <person name="Bowyer P."/>
            <person name="Chen D."/>
            <person name="Collins M."/>
            <person name="Coulsen R."/>
            <person name="Davies R."/>
            <person name="Dyer P.S."/>
            <person name="Farman M.L."/>
            <person name="Fedorova N."/>
            <person name="Fedorova N.D."/>
            <person name="Feldblyum T.V."/>
            <person name="Fischer R."/>
            <person name="Fosker N."/>
            <person name="Fraser A."/>
            <person name="Garcia J.L."/>
            <person name="Garcia M.J."/>
            <person name="Goble A."/>
            <person name="Goldman G.H."/>
            <person name="Gomi K."/>
            <person name="Griffith-Jones S."/>
            <person name="Gwilliam R."/>
            <person name="Haas B.J."/>
            <person name="Haas H."/>
            <person name="Harris D.E."/>
            <person name="Horiuchi H."/>
            <person name="Huang J."/>
            <person name="Humphray S."/>
            <person name="Jimenez J."/>
            <person name="Keller N."/>
            <person name="Khouri H."/>
            <person name="Kitamoto K."/>
            <person name="Kobayashi T."/>
            <person name="Konzack S."/>
            <person name="Kulkarni R."/>
            <person name="Kumagai T."/>
            <person name="Lafton A."/>
            <person name="Latge J.-P."/>
            <person name="Li W."/>
            <person name="Lord A."/>
            <person name="Lu C."/>
            <person name="Majoros W.H."/>
            <person name="May G.S."/>
            <person name="Miller B.L."/>
            <person name="Mohamoud Y."/>
            <person name="Molina M."/>
            <person name="Monod M."/>
            <person name="Mouyna I."/>
            <person name="Mulligan S."/>
            <person name="Murphy L.D."/>
            <person name="O'Neil S."/>
            <person name="Paulsen I."/>
            <person name="Penalva M.A."/>
            <person name="Pertea M."/>
            <person name="Price C."/>
            <person name="Pritchard B.L."/>
            <person name="Quail M.A."/>
            <person name="Rabbinowitsch E."/>
            <person name="Rawlins N."/>
            <person name="Rajandream M.A."/>
            <person name="Reichard U."/>
            <person name="Renauld H."/>
            <person name="Robson G.D."/>
            <person name="Rodriguez de Cordoba S."/>
            <person name="Rodriguez-Pena J.M."/>
            <person name="Ronning C.M."/>
            <person name="Rutter S."/>
            <person name="Salzberg S.L."/>
            <person name="Sanchez M."/>
            <person name="Sanchez-Ferrero J.C."/>
            <person name="Saunders D."/>
            <person name="Seeger K."/>
            <person name="Squares R."/>
            <person name="Squares S."/>
            <person name="Takeuchi M."/>
            <person name="Tekaia F."/>
            <person name="Turner G."/>
            <person name="Vazquez de Aldana C.R."/>
            <person name="Weidman J."/>
            <person name="White O."/>
            <person name="Woodward J.R."/>
            <person name="Yu J.-H."/>
            <person name="Fraser C.M."/>
            <person name="Galagan J.E."/>
            <person name="Asai K."/>
            <person name="Machida M."/>
            <person name="Hall N."/>
            <person name="Barrell B.G."/>
            <person name="Denning D.W."/>
        </authorList>
    </citation>
    <scope>NUCLEOTIDE SEQUENCE [LARGE SCALE GENOMIC DNA]</scope>
    <source>
        <strain>ATCC MYA-4609 / CBS 101355 / FGSC A1100 / Af293</strain>
    </source>
</reference>
<reference key="2">
    <citation type="journal article" date="2015" name="Mol. Microbiol.">
        <title>Transcriptome analysis of cyclic AMP-dependent protein kinase A-regulated genes reveals the production of the novel natural compound fumipyrrole by Aspergillus fumigatus.</title>
        <authorList>
            <person name="Macheleidt J."/>
            <person name="Scherlach K."/>
            <person name="Neuwirth T."/>
            <person name="Schmidt-Heck W."/>
            <person name="Strassburger M."/>
            <person name="Spraker J."/>
            <person name="Baccile J.A."/>
            <person name="Schroeder F.C."/>
            <person name="Keller N.P."/>
            <person name="Hertweck C."/>
            <person name="Heinekamp T."/>
            <person name="Brakhage A.A."/>
        </authorList>
    </citation>
    <scope>FUNCTION</scope>
    <scope>INDUCTION</scope>
</reference>
<reference key="3">
    <citation type="journal article" date="2016" name="Nat. Chem. Biol.">
        <title>Plant-like biosynthesis of isoquinoline alkaloids in Aspergillus fumigatus.</title>
        <authorList>
            <person name="Baccile J.A."/>
            <person name="Spraker J.E."/>
            <person name="Le H.H."/>
            <person name="Brandenburger E."/>
            <person name="Gomez C."/>
            <person name="Bok J.W."/>
            <person name="Macheleidt J."/>
            <person name="Brakhage A.A."/>
            <person name="Hoffmeister D."/>
            <person name="Keller N.P."/>
            <person name="Schroeder F.C."/>
        </authorList>
    </citation>
    <scope>FUNCTION</scope>
    <scope>DISRUPTION PHENOTYPE</scope>
    <scope>COFACTOR</scope>
    <scope>CATALYTIC ACTIVITY</scope>
    <scope>BIOPHYSICOCHEMICAL PROPERTIES</scope>
</reference>
<reference key="4">
    <citation type="journal article" date="2018" name="J. Biol. Chem.">
        <title>Oxidative cyclization of N-methyl-dopa by a fungal flavoenzyme of the amine oxidase family.</title>
        <authorList>
            <person name="Lahham M."/>
            <person name="Pavkov-Keller T."/>
            <person name="Fuchs M."/>
            <person name="Niederhauser J."/>
            <person name="Chalhoub G."/>
            <person name="Daniel B."/>
            <person name="Kroutil W."/>
            <person name="Gruber K."/>
            <person name="Macheroux P."/>
        </authorList>
    </citation>
    <scope>X-RAY CRYSTALLOGRAPHY (2.60 ANGSTROMS) IN COMPLEX WITH FAD</scope>
    <scope>SUBUNIT</scope>
    <scope>COFACTOR</scope>
    <scope>FUNCTION</scope>
    <scope>CATALYTIC ACTIVITY</scope>
    <scope>SUBSTRATE SPECIFICITY</scope>
    <scope>BIOPHYSICOCHEMICAL PROPERTIES</scope>
    <scope>MUTAGENESIS OF ARG-63; ARG-66; TYR-121; LYS-304; ASP-444 AND LYS-448</scope>
</reference>
<organism>
    <name type="scientific">Aspergillus fumigatus (strain ATCC MYA-4609 / CBS 101355 / FGSC A1100 / Af293)</name>
    <name type="common">Neosartorya fumigata</name>
    <dbReference type="NCBI Taxonomy" id="330879"/>
    <lineage>
        <taxon>Eukaryota</taxon>
        <taxon>Fungi</taxon>
        <taxon>Dikarya</taxon>
        <taxon>Ascomycota</taxon>
        <taxon>Pezizomycotina</taxon>
        <taxon>Eurotiomycetes</taxon>
        <taxon>Eurotiomycetidae</taxon>
        <taxon>Eurotiales</taxon>
        <taxon>Aspergillaceae</taxon>
        <taxon>Aspergillus</taxon>
        <taxon>Aspergillus subgen. Fumigati</taxon>
    </lineage>
</organism>
<protein>
    <recommendedName>
        <fullName evidence="6">Amino acid oxidase fsqB</fullName>
        <ecNumber evidence="3 4">1.5.3.-</ecNumber>
    </recommendedName>
    <alternativeName>
        <fullName evidence="5">Fumipyrrole biosynthesis protein A</fullName>
    </alternativeName>
    <alternativeName>
        <fullName evidence="6">Fumisoquins biosynthesis protein B</fullName>
    </alternativeName>
</protein>
<dbReference type="EC" id="1.5.3.-" evidence="3 4"/>
<dbReference type="EMBL" id="AAHF01000012">
    <property type="protein sequence ID" value="EAL85695.1"/>
    <property type="molecule type" value="Genomic_DNA"/>
</dbReference>
<dbReference type="RefSeq" id="XP_747733.1">
    <property type="nucleotide sequence ID" value="XM_742640.1"/>
</dbReference>
<dbReference type="PDB" id="6GG2">
    <property type="method" value="X-ray"/>
    <property type="resolution" value="2.60 A"/>
    <property type="chains" value="A=1-497"/>
</dbReference>
<dbReference type="PDBsum" id="6GG2"/>
<dbReference type="SMR" id="Q4WD43"/>
<dbReference type="STRING" id="330879.Q4WD43"/>
<dbReference type="EnsemblFungi" id="EAL85695">
    <property type="protein sequence ID" value="EAL85695"/>
    <property type="gene ID" value="AFUA_6G03440"/>
</dbReference>
<dbReference type="GeneID" id="3505180"/>
<dbReference type="KEGG" id="afm:AFUA_6G03440"/>
<dbReference type="VEuPathDB" id="FungiDB:Afu6g03440"/>
<dbReference type="eggNOG" id="KOG2820">
    <property type="taxonomic scope" value="Eukaryota"/>
</dbReference>
<dbReference type="HOGENOM" id="CLU_007884_0_1_1"/>
<dbReference type="InParanoid" id="Q4WD43"/>
<dbReference type="OMA" id="NCGWAES"/>
<dbReference type="OrthoDB" id="2219495at2759"/>
<dbReference type="SABIO-RK" id="Q4WD43"/>
<dbReference type="Proteomes" id="UP000002530">
    <property type="component" value="Chromosome 6"/>
</dbReference>
<dbReference type="GO" id="GO:0050660">
    <property type="term" value="F:flavin adenine dinucleotide binding"/>
    <property type="evidence" value="ECO:0007669"/>
    <property type="project" value="InterPro"/>
</dbReference>
<dbReference type="GO" id="GO:0050031">
    <property type="term" value="F:L-pipecolate oxidase activity"/>
    <property type="evidence" value="ECO:0000318"/>
    <property type="project" value="GO_Central"/>
</dbReference>
<dbReference type="GO" id="GO:0004657">
    <property type="term" value="F:proline dehydrogenase activity"/>
    <property type="evidence" value="ECO:0000318"/>
    <property type="project" value="GO_Central"/>
</dbReference>
<dbReference type="GO" id="GO:0008115">
    <property type="term" value="F:sarcosine oxidase activity"/>
    <property type="evidence" value="ECO:0000318"/>
    <property type="project" value="GO_Central"/>
</dbReference>
<dbReference type="Gene3D" id="3.30.9.10">
    <property type="entry name" value="D-Amino Acid Oxidase, subunit A, domain 2"/>
    <property type="match status" value="2"/>
</dbReference>
<dbReference type="Gene3D" id="3.50.50.60">
    <property type="entry name" value="FAD/NAD(P)-binding domain"/>
    <property type="match status" value="3"/>
</dbReference>
<dbReference type="InterPro" id="IPR006076">
    <property type="entry name" value="FAD-dep_OxRdtase"/>
</dbReference>
<dbReference type="InterPro" id="IPR036188">
    <property type="entry name" value="FAD/NAD-bd_sf"/>
</dbReference>
<dbReference type="InterPro" id="IPR045170">
    <property type="entry name" value="MTOX"/>
</dbReference>
<dbReference type="PANTHER" id="PTHR10961">
    <property type="entry name" value="PEROXISOMAL SARCOSINE OXIDASE"/>
    <property type="match status" value="1"/>
</dbReference>
<dbReference type="PANTHER" id="PTHR10961:SF46">
    <property type="entry name" value="PEROXISOMAL SARCOSINE OXIDASE"/>
    <property type="match status" value="1"/>
</dbReference>
<dbReference type="Pfam" id="PF01266">
    <property type="entry name" value="DAO"/>
    <property type="match status" value="1"/>
</dbReference>
<dbReference type="SUPFAM" id="SSF51905">
    <property type="entry name" value="FAD/NAD(P)-binding domain"/>
    <property type="match status" value="1"/>
</dbReference>
<gene>
    <name evidence="6" type="primary">fsqB</name>
    <name evidence="5" type="synonym">fmpA</name>
    <name type="ORF">AFUA_6G03440</name>
</gene>
<feature type="chain" id="PRO_0000438869" description="Amino acid oxidase fsqB" evidence="1">
    <location>
        <begin position="1"/>
        <end position="497"/>
    </location>
</feature>
<feature type="binding site" evidence="4 9">
    <location>
        <position position="14"/>
    </location>
    <ligand>
        <name>FAD</name>
        <dbReference type="ChEBI" id="CHEBI:57692"/>
    </ligand>
</feature>
<feature type="binding site" evidence="4 9">
    <location>
        <position position="15"/>
    </location>
    <ligand>
        <name>FAD</name>
        <dbReference type="ChEBI" id="CHEBI:57692"/>
    </ligand>
</feature>
<feature type="binding site" evidence="4 9">
    <location>
        <position position="38"/>
    </location>
    <ligand>
        <name>FAD</name>
        <dbReference type="ChEBI" id="CHEBI:57692"/>
    </ligand>
</feature>
<feature type="binding site" evidence="4 9">
    <location>
        <position position="53"/>
    </location>
    <ligand>
        <name>FAD</name>
        <dbReference type="ChEBI" id="CHEBI:57692"/>
    </ligand>
</feature>
<feature type="binding site" evidence="4 9">
    <location>
        <position position="57"/>
    </location>
    <ligand>
        <name>FAD</name>
        <dbReference type="ChEBI" id="CHEBI:57692"/>
    </ligand>
</feature>
<feature type="binding site" evidence="4 9">
    <location>
        <position position="58"/>
    </location>
    <ligand>
        <name>FAD</name>
        <dbReference type="ChEBI" id="CHEBI:57692"/>
    </ligand>
</feature>
<feature type="binding site" evidence="4 9">
    <location>
        <position position="63"/>
    </location>
    <ligand>
        <name>FAD</name>
        <dbReference type="ChEBI" id="CHEBI:57692"/>
    </ligand>
</feature>
<feature type="binding site" evidence="4 9">
    <location>
        <position position="64"/>
    </location>
    <ligand>
        <name>FAD</name>
        <dbReference type="ChEBI" id="CHEBI:57692"/>
    </ligand>
</feature>
<feature type="binding site" evidence="4 9">
    <location>
        <position position="211"/>
    </location>
    <ligand>
        <name>FAD</name>
        <dbReference type="ChEBI" id="CHEBI:57692"/>
    </ligand>
</feature>
<feature type="binding site" evidence="4 9">
    <location>
        <position position="447"/>
    </location>
    <ligand>
        <name>FAD</name>
        <dbReference type="ChEBI" id="CHEBI:57692"/>
    </ligand>
</feature>
<feature type="binding site" evidence="4 9">
    <location>
        <position position="448"/>
    </location>
    <ligand>
        <name>FAD</name>
        <dbReference type="ChEBI" id="CHEBI:57692"/>
    </ligand>
</feature>
<feature type="modified residue" description="S-8alpha-FAD cysteine" evidence="4 9">
    <location>
        <position position="414"/>
    </location>
</feature>
<feature type="mutagenesis site" description="Severely compromises enzymatic activity." evidence="4">
    <original>R</original>
    <variation>M</variation>
    <location>
        <position position="63"/>
    </location>
</feature>
<feature type="mutagenesis site" description="Severely compromises enzymatic activity." evidence="4">
    <original>R</original>
    <variation>M</variation>
    <location>
        <position position="66"/>
    </location>
</feature>
<feature type="mutagenesis site" description="Severely compromises enzymatic activity." evidence="4">
    <original>Y</original>
    <variation>F</variation>
    <location>
        <position position="121"/>
    </location>
</feature>
<feature type="mutagenesis site" description="Severely compromises enzymatic activity." evidence="4">
    <original>K</original>
    <variation>A</variation>
    <location>
        <position position="304"/>
    </location>
</feature>
<feature type="mutagenesis site" description="Severely compromises enzymatic activity." evidence="4">
    <original>D</original>
    <variation>A</variation>
    <location>
        <position position="444"/>
    </location>
</feature>
<feature type="mutagenesis site" description="Impairs interaction with FAD and compromises enzymatic activity." evidence="4">
    <original>K</original>
    <variation>A</variation>
    <location>
        <position position="448"/>
    </location>
</feature>
<feature type="strand" evidence="10">
    <location>
        <begin position="5"/>
        <end position="10"/>
    </location>
</feature>
<feature type="helix" evidence="10">
    <location>
        <begin position="14"/>
        <end position="25"/>
    </location>
</feature>
<feature type="helix" evidence="10">
    <location>
        <begin position="27"/>
        <end position="29"/>
    </location>
</feature>
<feature type="strand" evidence="10">
    <location>
        <begin position="30"/>
        <end position="40"/>
    </location>
</feature>
<feature type="strand" evidence="10">
    <location>
        <begin position="63"/>
        <end position="65"/>
    </location>
</feature>
<feature type="helix" evidence="10">
    <location>
        <begin position="73"/>
        <end position="85"/>
    </location>
</feature>
<feature type="turn" evidence="10">
    <location>
        <begin position="86"/>
        <end position="94"/>
    </location>
</feature>
<feature type="strand" evidence="10">
    <location>
        <begin position="95"/>
        <end position="97"/>
    </location>
</feature>
<feature type="strand" evidence="10">
    <location>
        <begin position="100"/>
        <end position="107"/>
    </location>
</feature>
<feature type="helix" evidence="10">
    <location>
        <begin position="120"/>
        <end position="132"/>
    </location>
</feature>
<feature type="helix" evidence="10">
    <location>
        <begin position="136"/>
        <end position="139"/>
    </location>
</feature>
<feature type="helix" evidence="10">
    <location>
        <begin position="146"/>
        <end position="152"/>
    </location>
</feature>
<feature type="strand" evidence="10">
    <location>
        <begin position="161"/>
        <end position="163"/>
    </location>
</feature>
<feature type="strand" evidence="10">
    <location>
        <begin position="173"/>
        <end position="181"/>
    </location>
</feature>
<feature type="strand" evidence="10">
    <location>
        <begin position="183"/>
        <end position="185"/>
    </location>
</feature>
<feature type="helix" evidence="10">
    <location>
        <begin position="187"/>
        <end position="201"/>
    </location>
</feature>
<feature type="strand" evidence="10">
    <location>
        <begin position="205"/>
        <end position="208"/>
    </location>
</feature>
<feature type="strand" evidence="10">
    <location>
        <begin position="211"/>
        <end position="216"/>
    </location>
</feature>
<feature type="strand" evidence="10">
    <location>
        <begin position="218"/>
        <end position="228"/>
    </location>
</feature>
<feature type="strand" evidence="10">
    <location>
        <begin position="233"/>
        <end position="235"/>
    </location>
</feature>
<feature type="strand" evidence="10">
    <location>
        <begin position="237"/>
        <end position="241"/>
    </location>
</feature>
<feature type="helix" evidence="10">
    <location>
        <begin position="244"/>
        <end position="246"/>
    </location>
</feature>
<feature type="helix" evidence="10">
    <location>
        <begin position="247"/>
        <end position="251"/>
    </location>
</feature>
<feature type="strand" evidence="10">
    <location>
        <begin position="258"/>
        <end position="268"/>
    </location>
</feature>
<feature type="helix" evidence="10">
    <location>
        <begin position="271"/>
        <end position="279"/>
    </location>
</feature>
<feature type="strand" evidence="10">
    <location>
        <begin position="284"/>
        <end position="287"/>
    </location>
</feature>
<feature type="turn" evidence="10">
    <location>
        <begin position="288"/>
        <end position="291"/>
    </location>
</feature>
<feature type="strand" evidence="10">
    <location>
        <begin position="292"/>
        <end position="295"/>
    </location>
</feature>
<feature type="strand" evidence="10">
    <location>
        <begin position="301"/>
        <end position="307"/>
    </location>
</feature>
<feature type="helix" evidence="10">
    <location>
        <begin position="310"/>
        <end position="319"/>
    </location>
</feature>
<feature type="helix" evidence="10">
    <location>
        <begin position="331"/>
        <end position="337"/>
    </location>
</feature>
<feature type="turn" evidence="10">
    <location>
        <begin position="341"/>
        <end position="344"/>
    </location>
</feature>
<feature type="strand" evidence="10">
    <location>
        <begin position="357"/>
        <end position="359"/>
    </location>
</feature>
<feature type="helix" evidence="10">
    <location>
        <begin position="362"/>
        <end position="380"/>
    </location>
</feature>
<feature type="turn" evidence="10">
    <location>
        <begin position="382"/>
        <end position="385"/>
    </location>
</feature>
<feature type="helix" evidence="10">
    <location>
        <begin position="398"/>
        <end position="405"/>
    </location>
</feature>
<feature type="strand" evidence="10">
    <location>
        <begin position="410"/>
        <end position="418"/>
    </location>
</feature>
<feature type="strand" evidence="10">
    <location>
        <begin position="420"/>
        <end position="422"/>
    </location>
</feature>
<feature type="strand" evidence="10">
    <location>
        <begin position="425"/>
        <end position="428"/>
    </location>
</feature>
<feature type="helix" evidence="10">
    <location>
        <begin position="430"/>
        <end position="432"/>
    </location>
</feature>
<feature type="strand" evidence="10">
    <location>
        <begin position="435"/>
        <end position="440"/>
    </location>
</feature>
<feature type="helix" evidence="10">
    <location>
        <begin position="447"/>
        <end position="449"/>
    </location>
</feature>
<feature type="helix" evidence="10">
    <location>
        <begin position="450"/>
        <end position="463"/>
    </location>
</feature>
<feature type="turn" evidence="10">
    <location>
        <begin position="464"/>
        <end position="466"/>
    </location>
</feature>
<feature type="helix" evidence="10">
    <location>
        <begin position="480"/>
        <end position="486"/>
    </location>
</feature>
<feature type="helix" evidence="10">
    <location>
        <begin position="491"/>
        <end position="493"/>
    </location>
</feature>
<comment type="function">
    <text evidence="2 3 4 8">Amino acid oxidase; part of the gene cluster that mediates the biosynthesis of the isoquinoline alkaloids fumisoquin A, fumisoquin B and fumisoquin C; as well as small amounts of fumipyrrole as a shunt metabolite (PubMed:25582336, PubMed:27065235, PubMed:30194285). The products of the cluster lead to a brown coloration and are important for growth and conidiation (PubMed:25582336). The nonribosomal peptide synthetase-like protein fsqF, which lacks a canonical condensation domain, is required for addition of a serine-derived dehydroalanine moiety to activated tyrosine but is not essential for the subsequent steps leading to isoquinoline formation (PubMed:27065235). A different enzyme, most likely the ATP-grasp enzyme fsqD, is responsible for activation of tyrosine (Probable). Three additional enzymes encoded by the fsq cluster, the N-methyltransferase fsqC, the phenol 2-monooxygenase fsqG and the FAD-dependent oxidase fsqB, catalyze the formation of the isoquinoline ring system in the fumisoquins (PubMed:27065235, PubMed:30194285). FsqB converts the fspF thiolation domain-bound (2S,4S,5S)-2-amino-6-(3,4-dihydroxyphenyl)-4-hydroxy-5-(methylamino)hexanoyl into isoquinoline (PubMed:27065235, PubMed:30194285). The cyclization most likely proceeds via a two-step mechanism, beginning with FAD-dependent oxidation of the methyl group to an iminium species followed by electrophilic attack on the deprotonated phenol (Probable).</text>
</comment>
<comment type="function">
    <text evidence="3 4">Is able to convert N-methyl-3,4-dihydroxy-DL-phenylalanine (N-methyl-DOPA) directly into cyclic isoquinoline, in vitro (PubMed:27065235, PubMed:30194285). The absence of the meta-hydroxyl group, as in L-N-methyl-tyrosine, leads to a 25-fold lower rate of reduction and the formation of the demethylated product L-tyrosine, instead of a cyclic product (PubMed:30194285). Does not accept the D-stereoisomer of N-methyltyrosine, in contrast to N-methyl-DOPA, for which both stereoisomers are oxidized with similar rates (PubMed:30194285).</text>
</comment>
<comment type="catalytic activity">
    <reaction evidence="3">
        <text>(2S,4S,5S)-2-amino-6-(3,4-dihydroxyphenyl)-4-hydroxy-5-(methylamino)hexanoyl-[peptidyl-carrier protein] + O2 = (2S,4S)-2-amino-4-[(3S)-7,8-dihydroxy-1,2,3,4-tetrahydroisoquinolin-3-yl]-4-hydroxybutanoyl-[peptidyl-carrier protein] + H2O2</text>
        <dbReference type="Rhea" id="RHEA:66628"/>
        <dbReference type="Rhea" id="RHEA-COMP:17077"/>
        <dbReference type="Rhea" id="RHEA-COMP:17078"/>
        <dbReference type="ChEBI" id="CHEBI:15379"/>
        <dbReference type="ChEBI" id="CHEBI:16240"/>
        <dbReference type="ChEBI" id="CHEBI:167304"/>
        <dbReference type="ChEBI" id="CHEBI:167307"/>
    </reaction>
    <physiologicalReaction direction="left-to-right" evidence="3">
        <dbReference type="Rhea" id="RHEA:66629"/>
    </physiologicalReaction>
</comment>
<comment type="catalytic activity">
    <reaction evidence="4">
        <text>N-methyl-L-dopa + O2 = (3S)-7,8-dihydroxy-1,2,3,4-tetrahydroisoquinoline-3-carboxylate + H2O2</text>
        <dbReference type="Rhea" id="RHEA:66788"/>
        <dbReference type="ChEBI" id="CHEBI:15379"/>
        <dbReference type="ChEBI" id="CHEBI:16240"/>
        <dbReference type="ChEBI" id="CHEBI:167490"/>
        <dbReference type="ChEBI" id="CHEBI:167492"/>
    </reaction>
    <physiologicalReaction direction="left-to-right" evidence="4">
        <dbReference type="Rhea" id="RHEA:66789"/>
    </physiologicalReaction>
</comment>
<comment type="catalytic activity">
    <reaction evidence="4">
        <text>N-methyl-D-dopa + O2 = (3R)-7,8-dihydroxy-1,2,3,4-tetrahydroisoquinoline-3-carboxylate + H2O2</text>
        <dbReference type="Rhea" id="RHEA:66792"/>
        <dbReference type="ChEBI" id="CHEBI:15379"/>
        <dbReference type="ChEBI" id="CHEBI:16240"/>
        <dbReference type="ChEBI" id="CHEBI:167491"/>
        <dbReference type="ChEBI" id="CHEBI:167493"/>
    </reaction>
    <physiologicalReaction direction="left-to-right" evidence="4">
        <dbReference type="Rhea" id="RHEA:66793"/>
    </physiologicalReaction>
</comment>
<comment type="cofactor">
    <cofactor evidence="3 4">
        <name>FAD</name>
        <dbReference type="ChEBI" id="CHEBI:57692"/>
    </cofactor>
</comment>
<comment type="biophysicochemical properties">
    <kinetics>
        <KM evidence="3">142.5 uM for N-methyl-DOPA</KM>
        <KM evidence="4">0.16 mM for rac-N-methyl-DOPA</KM>
        <KM evidence="4">0.25 mM for L-N-methyl-DOPA</KM>
        <KM evidence="4">2.1 mM for L-N-methyl-tyrosine</KM>
        <KM evidence="4">1.6 mM for rac-N-methyl-meta-tyrosine</KM>
    </kinetics>
    <phDependence>
        <text evidence="4">Optimum pH is 7.6.</text>
    </phDependence>
</comment>
<comment type="pathway">
    <text evidence="3 4">Secondary metabolite biosynthesis.</text>
</comment>
<comment type="subunit">
    <text evidence="4">Dimer.</text>
</comment>
<comment type="induction">
    <text evidence="2 3">Expression is positively regulated by the fumisoquins biosynthesis specific transcription factor fsqA (PubMed:25582336).</text>
</comment>
<comment type="disruption phenotype">
    <text evidence="3">Leads to complete abolishment of isoquinoline alkaloid production and accumulation of a series of benzyl pyrroles, including fumipyrrole.</text>
</comment>
<comment type="similarity">
    <text evidence="7">Belongs to the MSOX/MTOX family.</text>
</comment>
<accession>Q4WD43</accession>
<proteinExistence type="evidence at protein level"/>
<keyword id="KW-0002">3D-structure</keyword>
<keyword id="KW-0274">FAD</keyword>
<keyword id="KW-0285">Flavoprotein</keyword>
<keyword id="KW-0560">Oxidoreductase</keyword>
<keyword id="KW-1185">Reference proteome</keyword>